<name>TAL_OPITP</name>
<sequence length="315" mass="34886">MPTNQLEQLKQFTTVVADSSDFDSMKSYQPRDATTNPSLILKAAGMPDYGHLVEKAITDAGSGASPAAVIDLLLVLFGAEILKIVPGRVSTEVDARLSFDRVGSMEKARTLIALYEKQGVPRERILIKLASTWEGIRAAEKLQQEGINCNMTLLFSFPQAVAAAKAKVKLISPFVGRILDWYKKSTGQDYAPADDPGVNSVREIYTYYKRFGYETEVMGASFRNKDEILELAGCDLLTIAPKLLGELAASTDPVERKLEPEAARKAKVKRVSFDEKSFRWALNEDQMATEKLSDGIRSFAADVRKLEQLIQQQRG</sequence>
<evidence type="ECO:0000250" key="1"/>
<evidence type="ECO:0000255" key="2">
    <source>
        <dbReference type="HAMAP-Rule" id="MF_00492"/>
    </source>
</evidence>
<keyword id="KW-0963">Cytoplasm</keyword>
<keyword id="KW-0570">Pentose shunt</keyword>
<keyword id="KW-1185">Reference proteome</keyword>
<keyword id="KW-0704">Schiff base</keyword>
<keyword id="KW-0808">Transferase</keyword>
<proteinExistence type="inferred from homology"/>
<accession>B1ZUE6</accession>
<protein>
    <recommendedName>
        <fullName evidence="2">Transaldolase</fullName>
        <ecNumber evidence="2">2.2.1.2</ecNumber>
    </recommendedName>
</protein>
<dbReference type="EC" id="2.2.1.2" evidence="2"/>
<dbReference type="EMBL" id="CP001032">
    <property type="protein sequence ID" value="ACB73989.1"/>
    <property type="molecule type" value="Genomic_DNA"/>
</dbReference>
<dbReference type="RefSeq" id="WP_012373527.1">
    <property type="nucleotide sequence ID" value="NC_010571.1"/>
</dbReference>
<dbReference type="SMR" id="B1ZUE6"/>
<dbReference type="STRING" id="452637.Oter_0700"/>
<dbReference type="KEGG" id="ote:Oter_0700"/>
<dbReference type="eggNOG" id="COG0176">
    <property type="taxonomic scope" value="Bacteria"/>
</dbReference>
<dbReference type="HOGENOM" id="CLU_047470_0_1_0"/>
<dbReference type="OrthoDB" id="9807051at2"/>
<dbReference type="UniPathway" id="UPA00115">
    <property type="reaction ID" value="UER00414"/>
</dbReference>
<dbReference type="Proteomes" id="UP000007013">
    <property type="component" value="Chromosome"/>
</dbReference>
<dbReference type="GO" id="GO:0005737">
    <property type="term" value="C:cytoplasm"/>
    <property type="evidence" value="ECO:0007669"/>
    <property type="project" value="UniProtKB-SubCell"/>
</dbReference>
<dbReference type="GO" id="GO:0004801">
    <property type="term" value="F:transaldolase activity"/>
    <property type="evidence" value="ECO:0000250"/>
    <property type="project" value="UniProtKB"/>
</dbReference>
<dbReference type="GO" id="GO:0005975">
    <property type="term" value="P:carbohydrate metabolic process"/>
    <property type="evidence" value="ECO:0007669"/>
    <property type="project" value="InterPro"/>
</dbReference>
<dbReference type="GO" id="GO:0006098">
    <property type="term" value="P:pentose-phosphate shunt"/>
    <property type="evidence" value="ECO:0007669"/>
    <property type="project" value="UniProtKB-UniRule"/>
</dbReference>
<dbReference type="CDD" id="cd00957">
    <property type="entry name" value="Transaldolase_TalAB"/>
    <property type="match status" value="1"/>
</dbReference>
<dbReference type="FunFam" id="3.20.20.70:FF:000002">
    <property type="entry name" value="Transaldolase"/>
    <property type="match status" value="1"/>
</dbReference>
<dbReference type="Gene3D" id="3.20.20.70">
    <property type="entry name" value="Aldolase class I"/>
    <property type="match status" value="1"/>
</dbReference>
<dbReference type="HAMAP" id="MF_00492">
    <property type="entry name" value="Transaldolase_1"/>
    <property type="match status" value="1"/>
</dbReference>
<dbReference type="InterPro" id="IPR013785">
    <property type="entry name" value="Aldolase_TIM"/>
</dbReference>
<dbReference type="InterPro" id="IPR001585">
    <property type="entry name" value="TAL/FSA"/>
</dbReference>
<dbReference type="InterPro" id="IPR004730">
    <property type="entry name" value="Transaldolase_1"/>
</dbReference>
<dbReference type="InterPro" id="IPR018225">
    <property type="entry name" value="Transaldolase_AS"/>
</dbReference>
<dbReference type="NCBIfam" id="NF009001">
    <property type="entry name" value="PRK12346.1"/>
    <property type="match status" value="1"/>
</dbReference>
<dbReference type="NCBIfam" id="TIGR00874">
    <property type="entry name" value="talAB"/>
    <property type="match status" value="1"/>
</dbReference>
<dbReference type="PANTHER" id="PTHR10683">
    <property type="entry name" value="TRANSALDOLASE"/>
    <property type="match status" value="1"/>
</dbReference>
<dbReference type="PANTHER" id="PTHR10683:SF18">
    <property type="entry name" value="TRANSALDOLASE"/>
    <property type="match status" value="1"/>
</dbReference>
<dbReference type="Pfam" id="PF00923">
    <property type="entry name" value="TAL_FSA"/>
    <property type="match status" value="1"/>
</dbReference>
<dbReference type="SUPFAM" id="SSF51569">
    <property type="entry name" value="Aldolase"/>
    <property type="match status" value="1"/>
</dbReference>
<dbReference type="PROSITE" id="PS01054">
    <property type="entry name" value="TRANSALDOLASE_1"/>
    <property type="match status" value="1"/>
</dbReference>
<dbReference type="PROSITE" id="PS00958">
    <property type="entry name" value="TRANSALDOLASE_2"/>
    <property type="match status" value="1"/>
</dbReference>
<comment type="function">
    <text evidence="2">Transaldolase is important for the balance of metabolites in the pentose-phosphate pathway.</text>
</comment>
<comment type="catalytic activity">
    <reaction evidence="2">
        <text>D-sedoheptulose 7-phosphate + D-glyceraldehyde 3-phosphate = D-erythrose 4-phosphate + beta-D-fructose 6-phosphate</text>
        <dbReference type="Rhea" id="RHEA:17053"/>
        <dbReference type="ChEBI" id="CHEBI:16897"/>
        <dbReference type="ChEBI" id="CHEBI:57483"/>
        <dbReference type="ChEBI" id="CHEBI:57634"/>
        <dbReference type="ChEBI" id="CHEBI:59776"/>
        <dbReference type="EC" id="2.2.1.2"/>
    </reaction>
</comment>
<comment type="pathway">
    <text evidence="2">Carbohydrate degradation; pentose phosphate pathway; D-glyceraldehyde 3-phosphate and beta-D-fructose 6-phosphate from D-ribose 5-phosphate and D-xylulose 5-phosphate (non-oxidative stage): step 2/3.</text>
</comment>
<comment type="subunit">
    <text evidence="1">Homodimer.</text>
</comment>
<comment type="subcellular location">
    <subcellularLocation>
        <location evidence="2">Cytoplasm</location>
    </subcellularLocation>
</comment>
<comment type="similarity">
    <text evidence="2">Belongs to the transaldolase family. Type 1 subfamily.</text>
</comment>
<gene>
    <name evidence="2" type="primary">tal</name>
    <name type="ordered locus">Oter_0700</name>
</gene>
<reference key="1">
    <citation type="journal article" date="2011" name="J. Bacteriol.">
        <title>Genome sequence of the verrucomicrobium Opitutus terrae PB90-1, an abundant inhabitant of rice paddy soil ecosystems.</title>
        <authorList>
            <person name="van Passel M.W."/>
            <person name="Kant R."/>
            <person name="Palva A."/>
            <person name="Copeland A."/>
            <person name="Lucas S."/>
            <person name="Lapidus A."/>
            <person name="Glavina del Rio T."/>
            <person name="Pitluck S."/>
            <person name="Goltsman E."/>
            <person name="Clum A."/>
            <person name="Sun H."/>
            <person name="Schmutz J."/>
            <person name="Larimer F.W."/>
            <person name="Land M.L."/>
            <person name="Hauser L."/>
            <person name="Kyrpides N."/>
            <person name="Mikhailova N."/>
            <person name="Richardson P.P."/>
            <person name="Janssen P.H."/>
            <person name="de Vos W.M."/>
            <person name="Smidt H."/>
        </authorList>
    </citation>
    <scope>NUCLEOTIDE SEQUENCE [LARGE SCALE GENOMIC DNA]</scope>
    <source>
        <strain>DSM 11246 / JCM 15787 / PB90-1</strain>
    </source>
</reference>
<feature type="chain" id="PRO_1000126248" description="Transaldolase">
    <location>
        <begin position="1"/>
        <end position="315"/>
    </location>
</feature>
<feature type="active site" description="Schiff-base intermediate with substrate" evidence="2">
    <location>
        <position position="128"/>
    </location>
</feature>
<organism>
    <name type="scientific">Opitutus terrae (strain DSM 11246 / JCM 15787 / PB90-1)</name>
    <dbReference type="NCBI Taxonomy" id="452637"/>
    <lineage>
        <taxon>Bacteria</taxon>
        <taxon>Pseudomonadati</taxon>
        <taxon>Verrucomicrobiota</taxon>
        <taxon>Opitutia</taxon>
        <taxon>Opitutales</taxon>
        <taxon>Opitutaceae</taxon>
        <taxon>Opitutus</taxon>
    </lineage>
</organism>